<comment type="subcellular location">
    <subcellularLocation>
        <location evidence="1">Cell outer membrane</location>
    </subcellularLocation>
</comment>
<comment type="similarity">
    <text evidence="2">Belongs to the OmpW/AlkL family.</text>
</comment>
<protein>
    <recommendedName>
        <fullName>Outer membrane protein W</fullName>
    </recommendedName>
    <alternativeName>
        <fullName>Outer membrane protein 25Va</fullName>
        <shortName>Omp25Va</shortName>
    </alternativeName>
</protein>
<dbReference type="STRING" id="663.BAU10_23890"/>
<dbReference type="eggNOG" id="COG3047">
    <property type="taxonomic scope" value="Bacteria"/>
</dbReference>
<dbReference type="GO" id="GO:0009279">
    <property type="term" value="C:cell outer membrane"/>
    <property type="evidence" value="ECO:0007669"/>
    <property type="project" value="UniProtKB-SubCell"/>
</dbReference>
<accession>P83151</accession>
<evidence type="ECO:0000269" key="1">
    <source ref="1"/>
</evidence>
<evidence type="ECO:0000305" key="2"/>
<keyword id="KW-0998">Cell outer membrane</keyword>
<keyword id="KW-0903">Direct protein sequencing</keyword>
<keyword id="KW-0472">Membrane</keyword>
<keyword id="KW-0812">Transmembrane</keyword>
<keyword id="KW-1134">Transmembrane beta strand</keyword>
<name>OMPW_VIBAL</name>
<reference key="1">
    <citation type="submission" date="2001-10" db="UniProtKB">
        <title>Characterization of major outer membrane proteins of Vibrio alginolyticus and the stability against proteases.</title>
        <authorList>
            <person name="Onji M."/>
            <person name="Hirabayashi J."/>
            <person name="Suzuki S."/>
        </authorList>
    </citation>
    <scope>PROTEIN SEQUENCE</scope>
    <scope>SUBCELLULAR LOCATION</scope>
    <source>
        <strain>ATCC 17749 / DSM 2171 / NBRC 15630 / NCIMB 1903 / XII-53</strain>
    </source>
</reference>
<feature type="chain" id="PRO_0000201034" description="Outer membrane protein W">
    <location>
        <begin position="1"/>
        <end position="20" status="greater than"/>
    </location>
</feature>
<feature type="non-terminal residue">
    <location>
        <position position="20"/>
    </location>
</feature>
<sequence length="20" mass="2096">HKQGDFVLRVGAASVVPNDS</sequence>
<organism>
    <name type="scientific">Vibrio alginolyticus</name>
    <dbReference type="NCBI Taxonomy" id="663"/>
    <lineage>
        <taxon>Bacteria</taxon>
        <taxon>Pseudomonadati</taxon>
        <taxon>Pseudomonadota</taxon>
        <taxon>Gammaproteobacteria</taxon>
        <taxon>Vibrionales</taxon>
        <taxon>Vibrionaceae</taxon>
        <taxon>Vibrio</taxon>
    </lineage>
</organism>
<gene>
    <name type="primary">ompW</name>
</gene>
<proteinExistence type="evidence at protein level"/>